<comment type="function">
    <text>Unknown. May be an iron-siderophore receptor.</text>
</comment>
<comment type="subcellular location">
    <subcellularLocation>
        <location evidence="2">Cell outer membrane</location>
        <topology evidence="2">Multi-pass membrane protein</topology>
    </subcellularLocation>
</comment>
<comment type="induction">
    <text>By iron starvation.</text>
</comment>
<comment type="similarity">
    <text evidence="3">Belongs to the TonB-dependent receptor family.</text>
</comment>
<keyword id="KW-0998">Cell outer membrane</keyword>
<keyword id="KW-0406">Ion transport</keyword>
<keyword id="KW-0408">Iron</keyword>
<keyword id="KW-0410">Iron transport</keyword>
<keyword id="KW-0472">Membrane</keyword>
<keyword id="KW-0675">Receptor</keyword>
<keyword id="KW-1185">Reference proteome</keyword>
<keyword id="KW-0732">Signal</keyword>
<keyword id="KW-0798">TonB box</keyword>
<keyword id="KW-0812">Transmembrane</keyword>
<keyword id="KW-1134">Transmembrane beta strand</keyword>
<keyword id="KW-0813">Transport</keyword>
<protein>
    <recommendedName>
        <fullName>Lactoferrin-binding protein A</fullName>
    </recommendedName>
    <alternativeName>
        <fullName>Iron-regulated outer membrane protein A</fullName>
    </alternativeName>
</protein>
<accession>Q06379</accession>
<accession>Q9JYK5</accession>
<proteinExistence type="evidence at transcript level"/>
<organism>
    <name type="scientific">Neisseria meningitidis serogroup B (strain ATCC BAA-335 / MC58)</name>
    <dbReference type="NCBI Taxonomy" id="122586"/>
    <lineage>
        <taxon>Bacteria</taxon>
        <taxon>Pseudomonadati</taxon>
        <taxon>Pseudomonadota</taxon>
        <taxon>Betaproteobacteria</taxon>
        <taxon>Neisseriales</taxon>
        <taxon>Neisseriaceae</taxon>
        <taxon>Neisseria</taxon>
    </lineage>
</organism>
<dbReference type="EMBL" id="X69214">
    <property type="protein sequence ID" value="CAA49148.1"/>
    <property type="molecule type" value="Genomic_DNA"/>
</dbReference>
<dbReference type="EMBL" id="AE002098">
    <property type="protein sequence ID" value="AAF41895.1"/>
    <property type="molecule type" value="Genomic_DNA"/>
</dbReference>
<dbReference type="PIR" id="G81070">
    <property type="entry name" value="G81070"/>
</dbReference>
<dbReference type="RefSeq" id="NP_274547.1">
    <property type="nucleotide sequence ID" value="NC_003112.2"/>
</dbReference>
<dbReference type="RefSeq" id="WP_002247545.1">
    <property type="nucleotide sequence ID" value="NC_003112.2"/>
</dbReference>
<dbReference type="SMR" id="Q06379"/>
<dbReference type="STRING" id="122586.NMB1540"/>
<dbReference type="PaxDb" id="122586-NMB1540"/>
<dbReference type="KEGG" id="nme:NMB1540"/>
<dbReference type="PATRIC" id="fig|122586.8.peg.1967"/>
<dbReference type="HOGENOM" id="CLU_008287_19_0_4"/>
<dbReference type="InParanoid" id="Q06379"/>
<dbReference type="OrthoDB" id="9764669at2"/>
<dbReference type="Proteomes" id="UP000000425">
    <property type="component" value="Chromosome"/>
</dbReference>
<dbReference type="GO" id="GO:0009279">
    <property type="term" value="C:cell outer membrane"/>
    <property type="evidence" value="ECO:0000318"/>
    <property type="project" value="GO_Central"/>
</dbReference>
<dbReference type="GO" id="GO:0015091">
    <property type="term" value="F:ferric iron transmembrane transporter activity"/>
    <property type="evidence" value="ECO:0007669"/>
    <property type="project" value="InterPro"/>
</dbReference>
<dbReference type="GO" id="GO:0015344">
    <property type="term" value="F:siderophore uptake transmembrane transporter activity"/>
    <property type="evidence" value="ECO:0000318"/>
    <property type="project" value="GO_Central"/>
</dbReference>
<dbReference type="GO" id="GO:0044718">
    <property type="term" value="P:siderophore transmembrane transport"/>
    <property type="evidence" value="ECO:0000318"/>
    <property type="project" value="GO_Central"/>
</dbReference>
<dbReference type="CDD" id="cd01347">
    <property type="entry name" value="ligand_gated_channel"/>
    <property type="match status" value="1"/>
</dbReference>
<dbReference type="Gene3D" id="2.40.170.20">
    <property type="entry name" value="TonB-dependent receptor, beta-barrel domain"/>
    <property type="match status" value="1"/>
</dbReference>
<dbReference type="Gene3D" id="2.170.130.10">
    <property type="entry name" value="TonB-dependent receptor, plug domain"/>
    <property type="match status" value="1"/>
</dbReference>
<dbReference type="InterPro" id="IPR012910">
    <property type="entry name" value="Plug_dom"/>
</dbReference>
<dbReference type="InterPro" id="IPR037066">
    <property type="entry name" value="Plug_dom_sf"/>
</dbReference>
<dbReference type="InterPro" id="IPR039426">
    <property type="entry name" value="TonB-dep_rcpt-like"/>
</dbReference>
<dbReference type="InterPro" id="IPR000531">
    <property type="entry name" value="TonB-dep_rcpt_b-brl"/>
</dbReference>
<dbReference type="InterPro" id="IPR010949">
    <property type="entry name" value="TonB_Hb/transfer/lactofer_rcpt"/>
</dbReference>
<dbReference type="InterPro" id="IPR010948">
    <property type="entry name" value="TonB_lacto/transferrin_rcpt"/>
</dbReference>
<dbReference type="InterPro" id="IPR036942">
    <property type="entry name" value="TonB_rcpt_b-brl_sf"/>
</dbReference>
<dbReference type="InterPro" id="IPR010917">
    <property type="entry name" value="TonB_rcpt_CS"/>
</dbReference>
<dbReference type="NCBIfam" id="TIGR01786">
    <property type="entry name" value="TonB-hemlactrns"/>
    <property type="match status" value="1"/>
</dbReference>
<dbReference type="NCBIfam" id="TIGR01776">
    <property type="entry name" value="TonB-tbp-lbp"/>
    <property type="match status" value="1"/>
</dbReference>
<dbReference type="PANTHER" id="PTHR30069">
    <property type="entry name" value="TONB-DEPENDENT OUTER MEMBRANE RECEPTOR"/>
    <property type="match status" value="1"/>
</dbReference>
<dbReference type="PANTHER" id="PTHR30069:SF54">
    <property type="entry name" value="TRANSFERRIN-BINDING PROTEIN A"/>
    <property type="match status" value="1"/>
</dbReference>
<dbReference type="Pfam" id="PF07715">
    <property type="entry name" value="Plug"/>
    <property type="match status" value="1"/>
</dbReference>
<dbReference type="Pfam" id="PF00593">
    <property type="entry name" value="TonB_dep_Rec_b-barrel"/>
    <property type="match status" value="1"/>
</dbReference>
<dbReference type="SUPFAM" id="SSF56935">
    <property type="entry name" value="Porins"/>
    <property type="match status" value="1"/>
</dbReference>
<dbReference type="PROSITE" id="PS01156">
    <property type="entry name" value="TONB_DEPENDENT_REC_2"/>
    <property type="match status" value="1"/>
</dbReference>
<dbReference type="PROSITE" id="PS52016">
    <property type="entry name" value="TONB_DEPENDENT_REC_3"/>
    <property type="match status" value="1"/>
</dbReference>
<feature type="signal peptide" evidence="1">
    <location>
        <begin position="1"/>
        <end position="27"/>
    </location>
</feature>
<feature type="chain" id="PRO_0000034766" description="Lactoferrin-binding protein A">
    <location>
        <begin position="28"/>
        <end position="943"/>
    </location>
</feature>
<feature type="domain" description="TBDR plug" evidence="2">
    <location>
        <begin position="52"/>
        <end position="178"/>
    </location>
</feature>
<feature type="domain" description="TBDR beta-barrel" evidence="2">
    <location>
        <begin position="189"/>
        <end position="943"/>
    </location>
</feature>
<feature type="short sequence motif" description="TonB C-terminal box">
    <location>
        <begin position="926"/>
        <end position="943"/>
    </location>
</feature>
<feature type="sequence conflict" description="In Ref. 1; CAA49148." evidence="3" ref="1">
    <original>P</original>
    <variation>Q</variation>
    <location>
        <position position="8"/>
    </location>
</feature>
<feature type="sequence conflict" description="In Ref. 1; CAA49148." evidence="3" ref="1">
    <original>IAT</original>
    <variation>VAA</variation>
    <location>
        <begin position="16"/>
        <end position="18"/>
    </location>
</feature>
<feature type="sequence conflict" description="In Ref. 1; CAA49148." evidence="3" ref="1">
    <original>A</original>
    <variation>S</variation>
    <location>
        <position position="22"/>
    </location>
</feature>
<feature type="sequence conflict" description="In Ref. 1; CAA49148." evidence="3" ref="1">
    <original>QAGGAT</original>
    <variation>NPETAA</variation>
    <location>
        <begin position="26"/>
        <end position="31"/>
    </location>
</feature>
<feature type="sequence conflict" description="In Ref. 1; CAA49148." evidence="3" ref="1">
    <original>I</original>
    <variation>V</variation>
    <location>
        <position position="43"/>
    </location>
</feature>
<feature type="sequence conflict" description="In Ref. 1; CAA49148." evidence="3" ref="1">
    <original>V</original>
    <variation>A</variation>
    <location>
        <position position="64"/>
    </location>
</feature>
<feature type="sequence conflict" description="In Ref. 1; CAA49148." evidence="3" ref="1">
    <original>R</original>
    <variation>H</variation>
    <location>
        <position position="233"/>
    </location>
</feature>
<feature type="sequence conflict" description="In Ref. 1; CAA49148." evidence="3" ref="1">
    <original>E</original>
    <variation>A</variation>
    <location>
        <position position="243"/>
    </location>
</feature>
<feature type="sequence conflict" description="In Ref. 1; CAA49148." evidence="3" ref="1">
    <original>D</original>
    <variation>N</variation>
    <location>
        <position position="247"/>
    </location>
</feature>
<feature type="sequence conflict" description="In Ref. 1." evidence="3" ref="1">
    <original>DIKRKTREPFFSV</original>
    <variation>GIKKPSEGGEYFLA</variation>
    <location>
        <begin position="257"/>
        <end position="269"/>
    </location>
</feature>
<feature type="sequence conflict" description="In Ref. 1; CAA49148." evidence="3" ref="1">
    <original>RES</original>
    <variation>SEL</variation>
    <location>
        <begin position="273"/>
        <end position="275"/>
    </location>
</feature>
<feature type="sequence conflict" description="In Ref. 1; CAA49148." evidence="3" ref="1">
    <original>L</original>
    <variation>V</variation>
    <location>
        <position position="281"/>
    </location>
</feature>
<feature type="sequence conflict" description="In Ref. 1; CAA49148." evidence="3" ref="1">
    <original>YGK</original>
    <variation>NGN</variation>
    <location>
        <begin position="284"/>
        <end position="286"/>
    </location>
</feature>
<feature type="sequence conflict" description="In Ref. 1; CAA49148." evidence="3" ref="1">
    <original>Q</original>
    <variation>M</variation>
    <location>
        <position position="313"/>
    </location>
</feature>
<feature type="sequence conflict" description="In Ref. 1; CAA49148." evidence="3" ref="1">
    <original>E</original>
    <variation>K</variation>
    <location>
        <position position="389"/>
    </location>
</feature>
<feature type="sequence conflict" description="In Ref. 1; CAA49148." evidence="3" ref="1">
    <original>KNLV</original>
    <variation>QKLI</variation>
    <location>
        <begin position="420"/>
        <end position="423"/>
    </location>
</feature>
<feature type="sequence conflict" description="In Ref. 1; CAA49148." evidence="3" ref="1">
    <original>A</original>
    <variation>K</variation>
    <location>
        <position position="455"/>
    </location>
</feature>
<feature type="sequence conflict" description="In Ref. 1; CAA49148." evidence="3" ref="1">
    <original>K</original>
    <variation>N</variation>
    <location>
        <position position="546"/>
    </location>
</feature>
<feature type="sequence conflict" description="In Ref. 1; CAA49148." evidence="3" ref="1">
    <original>STGFDENNQ</original>
    <variation>YSDYTDKG</variation>
    <location>
        <begin position="564"/>
        <end position="572"/>
    </location>
</feature>
<feature type="sequence conflict" description="In Ref. 1; CAA49148." evidence="3" ref="1">
    <original>L</original>
    <variation>V</variation>
    <location>
        <position position="658"/>
    </location>
</feature>
<feature type="sequence conflict" description="In Ref. 1; CAA49148." evidence="3" ref="1">
    <original>V</original>
    <variation>L</variation>
    <location>
        <position position="667"/>
    </location>
</feature>
<name>LBPA_NEIMB</name>
<sequence length="943" mass="105681">MNKKHGFPLTLTALAIATAFPAYAAQAGGATPDAAQTQSLKEITVRAAKVGRRSKEATGLGKIVKTSETLNKEQVLGIRDLTRYDPGVAVVEQGNGASGGYSIRGVDKNRVAVSVDGVAQIQAFTVQGSLSGYGGRGGSGAINEIEYENISTVEIDKGAGSSDHGSGALGGAVAFRTKEAADLISDGKSWGIQAKTAYGSKNRQFMKSLGAGFSKDGWEGLLIRTERQGRETRPHGDIADGVEYGIDRLDAFRQTYDIKRKTREPFFSVEGERESKPVAKLAGYGKYLNNQLNRWVKERIEQNQPLSAEEEAQVREAQARHENLSAQAYTGGGRILPDPMDYRSGSWLAKLGYRFGGRHYVGGVFEDTKQRYDIRDMTEKQYYGTDEAEKFRDKSGVYDGDDFRDGLYFVPNIEEWKGDKNLVRGIGLKYSRTKFIDEHHRRRRMGLLYRYENEAYSDNWADKAVLSFDKQGVATDNNTLKLNCAVYPAVDKSCRASADKPYSYDSSDRFHYREQHNVLNASFEKSLKNKWTKHHLTLGFGYDASKAISRPEQLSHNAARISESTGFDENNQDKYLLGKPEVVEGSVCGYIETLRSRKCVPRKINGSNIHISLNDRFSIGKYFDFSLGGRYDRKNFTTSEELVRSGRYVDRSWNSGILFKPNRHFSVSYRASSGFRTPSFQELFGIDIYHDYPKGWQRPALKSEKAANREIGLQWKGDFGFLEISSFRNRYTDMIAVADHKTKLPNQAGQLTEIDIRDYYNAQNMSLQGVNILGKIDWNGVYGKLPEGLYTTLAYNRIKPKSVSNRPGLSLRSYALDAVQPSRYVLGFGYDQPEGKWGANIMLTYSKGKNPDELAYLAGDQKRYSTKRASSSWSTADVSAYLNLKKRLTLRAAIYNIGNYRYVTWESLRQTAESTANRHGGDSNYGRYAAPGRNFSLALEMKF</sequence>
<reference key="1">
    <citation type="journal article" date="1993" name="Infect. Immun.">
        <title>Molecular characterization of the 98-kilodalton iron-regulated outer membrane protein of Neisseria meningitidis.</title>
        <authorList>
            <person name="Pettersson A."/>
            <person name="van der Ley P."/>
            <person name="Poolman J.T."/>
            <person name="Tommassen J."/>
        </authorList>
    </citation>
    <scope>NUCLEOTIDE SEQUENCE [GENOMIC DNA]</scope>
    <source>
        <strain>BNCV / Serogroup B</strain>
    </source>
</reference>
<reference key="2">
    <citation type="journal article" date="2000" name="Science">
        <title>Complete genome sequence of Neisseria meningitidis serogroup B strain MC58.</title>
        <authorList>
            <person name="Tettelin H."/>
            <person name="Saunders N.J."/>
            <person name="Heidelberg J.F."/>
            <person name="Jeffries A.C."/>
            <person name="Nelson K.E."/>
            <person name="Eisen J.A."/>
            <person name="Ketchum K.A."/>
            <person name="Hood D.W."/>
            <person name="Peden J.F."/>
            <person name="Dodson R.J."/>
            <person name="Nelson W.C."/>
            <person name="Gwinn M.L."/>
            <person name="DeBoy R.T."/>
            <person name="Peterson J.D."/>
            <person name="Hickey E.K."/>
            <person name="Haft D.H."/>
            <person name="Salzberg S.L."/>
            <person name="White O."/>
            <person name="Fleischmann R.D."/>
            <person name="Dougherty B.A."/>
            <person name="Mason T.M."/>
            <person name="Ciecko A."/>
            <person name="Parksey D.S."/>
            <person name="Blair E."/>
            <person name="Cittone H."/>
            <person name="Clark E.B."/>
            <person name="Cotton M.D."/>
            <person name="Utterback T.R."/>
            <person name="Khouri H.M."/>
            <person name="Qin H."/>
            <person name="Vamathevan J.J."/>
            <person name="Gill J."/>
            <person name="Scarlato V."/>
            <person name="Masignani V."/>
            <person name="Pizza M."/>
            <person name="Grandi G."/>
            <person name="Sun L."/>
            <person name="Smith H.O."/>
            <person name="Fraser C.M."/>
            <person name="Moxon E.R."/>
            <person name="Rappuoli R."/>
            <person name="Venter J.C."/>
        </authorList>
    </citation>
    <scope>NUCLEOTIDE SEQUENCE [LARGE SCALE GENOMIC DNA]</scope>
    <source>
        <strain>ATCC BAA-335 / MC58</strain>
    </source>
</reference>
<evidence type="ECO:0000255" key="1"/>
<evidence type="ECO:0000255" key="2">
    <source>
        <dbReference type="PROSITE-ProRule" id="PRU01360"/>
    </source>
</evidence>
<evidence type="ECO:0000305" key="3"/>
<gene>
    <name type="primary">lbpA</name>
    <name type="synonym">iroA</name>
    <name type="ordered locus">NMB1540</name>
</gene>